<gene>
    <name type="primary">C9orf57</name>
</gene>
<accession>Q5W0N0</accession>
<accession>A1L456</accession>
<organism>
    <name type="scientific">Homo sapiens</name>
    <name type="common">Human</name>
    <dbReference type="NCBI Taxonomy" id="9606"/>
    <lineage>
        <taxon>Eukaryota</taxon>
        <taxon>Metazoa</taxon>
        <taxon>Chordata</taxon>
        <taxon>Craniata</taxon>
        <taxon>Vertebrata</taxon>
        <taxon>Euteleostomi</taxon>
        <taxon>Mammalia</taxon>
        <taxon>Eutheria</taxon>
        <taxon>Euarchontoglires</taxon>
        <taxon>Primates</taxon>
        <taxon>Haplorrhini</taxon>
        <taxon>Catarrhini</taxon>
        <taxon>Hominidae</taxon>
        <taxon>Homo</taxon>
    </lineage>
</organism>
<proteinExistence type="evidence at protein level"/>
<protein>
    <recommendedName>
        <fullName>Uncharacterized protein C9orf57</fullName>
    </recommendedName>
</protein>
<name>CI057_HUMAN</name>
<feature type="chain" id="PRO_0000227549" description="Uncharacterized protein C9orf57">
    <location>
        <begin position="1"/>
        <end position="161"/>
    </location>
</feature>
<feature type="transmembrane region" description="Helical" evidence="1">
    <location>
        <begin position="30"/>
        <end position="50"/>
    </location>
</feature>
<feature type="splice variant" id="VSP_056909" description="In isoform 2." evidence="2">
    <original>MKKIEISGTCLSFHLLFGLEIRMRRIVFAGVILFRLLGVILFRLLGVILFGRLG</original>
    <variation>MGVGFTELEYLAPWLRPPFS</variation>
    <location>
        <begin position="1"/>
        <end position="54"/>
    </location>
</feature>
<comment type="interaction">
    <interactant intactId="EBI-18101667">
        <id>Q5W0N0-2</id>
    </interactant>
    <interactant intactId="EBI-347538">
        <id>Q9Y4H4</id>
        <label>GPSM3</label>
    </interactant>
    <organismsDiffer>false</organismsDiffer>
    <experiments>3</experiments>
</comment>
<comment type="interaction">
    <interactant intactId="EBI-18101667">
        <id>Q5W0N0-2</id>
    </interactant>
    <interactant intactId="EBI-748265">
        <id>P78337</id>
        <label>PITX1</label>
    </interactant>
    <organismsDiffer>false</organismsDiffer>
    <experiments>3</experiments>
</comment>
<comment type="subcellular location">
    <subcellularLocation>
        <location evidence="3">Membrane</location>
        <topology evidence="3">Single-pass membrane protein</topology>
    </subcellularLocation>
</comment>
<comment type="alternative products">
    <event type="alternative splicing"/>
    <isoform>
        <id>Q5W0N0-1</id>
        <name>1</name>
        <sequence type="displayed"/>
    </isoform>
    <isoform>
        <id>Q5W0N0-2</id>
        <name>2</name>
        <sequence type="described" ref="VSP_056909"/>
    </isoform>
</comment>
<sequence>MKKIEISGTCLSFHLLFGLEIRMRRIVFAGVILFRLLGVILFRLLGVILFGRLGDLGTCQTKPGQYWKEEVHIQDVGGLICRACNLSLPFHGCLLDLGTCQAEPGQYCKEEVHIQGGIQWYSVKGCTKNTSECFKSTLVKRILQLHELVTTHCCNHSLCNF</sequence>
<keyword id="KW-0025">Alternative splicing</keyword>
<keyword id="KW-0472">Membrane</keyword>
<keyword id="KW-1185">Reference proteome</keyword>
<keyword id="KW-0812">Transmembrane</keyword>
<keyword id="KW-1133">Transmembrane helix</keyword>
<evidence type="ECO:0000255" key="1"/>
<evidence type="ECO:0000303" key="2">
    <source>
    </source>
</evidence>
<evidence type="ECO:0000305" key="3"/>
<dbReference type="EMBL" id="AL138751">
    <property type="status" value="NOT_ANNOTATED_CDS"/>
    <property type="molecule type" value="Genomic_DNA"/>
</dbReference>
<dbReference type="EMBL" id="AL583829">
    <property type="status" value="NOT_ANNOTATED_CDS"/>
    <property type="molecule type" value="Genomic_DNA"/>
</dbReference>
<dbReference type="EMBL" id="BC044620">
    <property type="status" value="NOT_ANNOTATED_CDS"/>
    <property type="molecule type" value="mRNA"/>
</dbReference>
<dbReference type="EMBL" id="BC130404">
    <property type="protein sequence ID" value="AAI30405.1"/>
    <property type="molecule type" value="mRNA"/>
</dbReference>
<dbReference type="EMBL" id="BC144273">
    <property type="protein sequence ID" value="AAI44274.1"/>
    <property type="molecule type" value="mRNA"/>
</dbReference>
<dbReference type="RefSeq" id="NP_001122090.1">
    <property type="nucleotide sequence ID" value="NM_001128618.1"/>
</dbReference>
<dbReference type="BioGRID" id="126506">
    <property type="interactions" value="3"/>
</dbReference>
<dbReference type="IntAct" id="Q5W0N0">
    <property type="interactions" value="2"/>
</dbReference>
<dbReference type="STRING" id="9606.ENSP00000366223"/>
<dbReference type="BioMuta" id="C9orf57"/>
<dbReference type="DMDM" id="74747958"/>
<dbReference type="jPOST" id="Q5W0N0"/>
<dbReference type="MassIVE" id="Q5W0N0"/>
<dbReference type="PaxDb" id="9606-ENSP00000366223"/>
<dbReference type="PeptideAtlas" id="Q5W0N0"/>
<dbReference type="Antibodypedia" id="49709">
    <property type="antibodies" value="68 antibodies from 10 providers"/>
</dbReference>
<dbReference type="DNASU" id="138240"/>
<dbReference type="Ensembl" id="ENST00000377024.8">
    <molecule id="Q5W0N0-1"/>
    <property type="protein sequence ID" value="ENSP00000366223.3"/>
    <property type="gene ID" value="ENSG00000204669.11"/>
</dbReference>
<dbReference type="Ensembl" id="ENST00000424431.3">
    <molecule id="Q5W0N0-2"/>
    <property type="protein sequence ID" value="ENSP00000412956.2"/>
    <property type="gene ID" value="ENSG00000204669.11"/>
</dbReference>
<dbReference type="GeneID" id="138240"/>
<dbReference type="KEGG" id="hsa:138240"/>
<dbReference type="UCSC" id="uc004aip.4">
    <molecule id="Q5W0N0-1"/>
    <property type="organism name" value="human"/>
</dbReference>
<dbReference type="AGR" id="HGNC:27037"/>
<dbReference type="CTD" id="138240"/>
<dbReference type="DisGeNET" id="138240"/>
<dbReference type="GeneCards" id="C9orf57"/>
<dbReference type="HGNC" id="HGNC:27037">
    <property type="gene designation" value="C9orf57"/>
</dbReference>
<dbReference type="HPA" id="ENSG00000204669">
    <property type="expression patterns" value="Tissue enriched (testis)"/>
</dbReference>
<dbReference type="neXtProt" id="NX_Q5W0N0"/>
<dbReference type="OpenTargets" id="ENSG00000204669"/>
<dbReference type="PharmGKB" id="PA134955143"/>
<dbReference type="VEuPathDB" id="HostDB:ENSG00000204669"/>
<dbReference type="eggNOG" id="ENOG502RU2K">
    <property type="taxonomic scope" value="Eukaryota"/>
</dbReference>
<dbReference type="GeneTree" id="ENSGT00410000028408"/>
<dbReference type="HOGENOM" id="CLU_139240_0_0_1"/>
<dbReference type="InParanoid" id="Q5W0N0"/>
<dbReference type="OrthoDB" id="9825335at2759"/>
<dbReference type="PAN-GO" id="Q5W0N0">
    <property type="GO annotations" value="0 GO annotations based on evolutionary models"/>
</dbReference>
<dbReference type="PhylomeDB" id="Q5W0N0"/>
<dbReference type="TreeFam" id="TF343601"/>
<dbReference type="PathwayCommons" id="Q5W0N0"/>
<dbReference type="SignaLink" id="Q5W0N0"/>
<dbReference type="BioGRID-ORCS" id="138240">
    <property type="hits" value="10 hits in 1090 CRISPR screens"/>
</dbReference>
<dbReference type="GenomeRNAi" id="138240"/>
<dbReference type="Pharos" id="Q5W0N0">
    <property type="development level" value="Tdark"/>
</dbReference>
<dbReference type="PRO" id="PR:Q5W0N0"/>
<dbReference type="Proteomes" id="UP000005640">
    <property type="component" value="Chromosome 9"/>
</dbReference>
<dbReference type="RNAct" id="Q5W0N0">
    <property type="molecule type" value="protein"/>
</dbReference>
<dbReference type="Bgee" id="ENSG00000204669">
    <property type="expression patterns" value="Expressed in male germ line stem cell (sensu Vertebrata) in testis and 18 other cell types or tissues"/>
</dbReference>
<dbReference type="ExpressionAtlas" id="Q5W0N0">
    <property type="expression patterns" value="baseline and differential"/>
</dbReference>
<dbReference type="GO" id="GO:0016020">
    <property type="term" value="C:membrane"/>
    <property type="evidence" value="ECO:0007669"/>
    <property type="project" value="UniProtKB-SubCell"/>
</dbReference>
<dbReference type="CDD" id="cd23610">
    <property type="entry name" value="TFP_LU_ECD_C9orf57"/>
    <property type="match status" value="1"/>
</dbReference>
<dbReference type="InterPro" id="IPR031710">
    <property type="entry name" value="DUF4723"/>
</dbReference>
<dbReference type="Pfam" id="PF15851">
    <property type="entry name" value="DUF4723"/>
    <property type="match status" value="1"/>
</dbReference>
<reference key="1">
    <citation type="journal article" date="2004" name="Nature">
        <title>DNA sequence and analysis of human chromosome 9.</title>
        <authorList>
            <person name="Humphray S.J."/>
            <person name="Oliver K."/>
            <person name="Hunt A.R."/>
            <person name="Plumb R.W."/>
            <person name="Loveland J.E."/>
            <person name="Howe K.L."/>
            <person name="Andrews T.D."/>
            <person name="Searle S."/>
            <person name="Hunt S.E."/>
            <person name="Scott C.E."/>
            <person name="Jones M.C."/>
            <person name="Ainscough R."/>
            <person name="Almeida J.P."/>
            <person name="Ambrose K.D."/>
            <person name="Ashwell R.I.S."/>
            <person name="Babbage A.K."/>
            <person name="Babbage S."/>
            <person name="Bagguley C.L."/>
            <person name="Bailey J."/>
            <person name="Banerjee R."/>
            <person name="Barker D.J."/>
            <person name="Barlow K.F."/>
            <person name="Bates K."/>
            <person name="Beasley H."/>
            <person name="Beasley O."/>
            <person name="Bird C.P."/>
            <person name="Bray-Allen S."/>
            <person name="Brown A.J."/>
            <person name="Brown J.Y."/>
            <person name="Burford D."/>
            <person name="Burrill W."/>
            <person name="Burton J."/>
            <person name="Carder C."/>
            <person name="Carter N.P."/>
            <person name="Chapman J.C."/>
            <person name="Chen Y."/>
            <person name="Clarke G."/>
            <person name="Clark S.Y."/>
            <person name="Clee C.M."/>
            <person name="Clegg S."/>
            <person name="Collier R.E."/>
            <person name="Corby N."/>
            <person name="Crosier M."/>
            <person name="Cummings A.T."/>
            <person name="Davies J."/>
            <person name="Dhami P."/>
            <person name="Dunn M."/>
            <person name="Dutta I."/>
            <person name="Dyer L.W."/>
            <person name="Earthrowl M.E."/>
            <person name="Faulkner L."/>
            <person name="Fleming C.J."/>
            <person name="Frankish A."/>
            <person name="Frankland J.A."/>
            <person name="French L."/>
            <person name="Fricker D.G."/>
            <person name="Garner P."/>
            <person name="Garnett J."/>
            <person name="Ghori J."/>
            <person name="Gilbert J.G.R."/>
            <person name="Glison C."/>
            <person name="Grafham D.V."/>
            <person name="Gribble S."/>
            <person name="Griffiths C."/>
            <person name="Griffiths-Jones S."/>
            <person name="Grocock R."/>
            <person name="Guy J."/>
            <person name="Hall R.E."/>
            <person name="Hammond S."/>
            <person name="Harley J.L."/>
            <person name="Harrison E.S.I."/>
            <person name="Hart E.A."/>
            <person name="Heath P.D."/>
            <person name="Henderson C.D."/>
            <person name="Hopkins B.L."/>
            <person name="Howard P.J."/>
            <person name="Howden P.J."/>
            <person name="Huckle E."/>
            <person name="Johnson C."/>
            <person name="Johnson D."/>
            <person name="Joy A.A."/>
            <person name="Kay M."/>
            <person name="Keenan S."/>
            <person name="Kershaw J.K."/>
            <person name="Kimberley A.M."/>
            <person name="King A."/>
            <person name="Knights A."/>
            <person name="Laird G.K."/>
            <person name="Langford C."/>
            <person name="Lawlor S."/>
            <person name="Leongamornlert D.A."/>
            <person name="Leversha M."/>
            <person name="Lloyd C."/>
            <person name="Lloyd D.M."/>
            <person name="Lovell J."/>
            <person name="Martin S."/>
            <person name="Mashreghi-Mohammadi M."/>
            <person name="Matthews L."/>
            <person name="McLaren S."/>
            <person name="McLay K.E."/>
            <person name="McMurray A."/>
            <person name="Milne S."/>
            <person name="Nickerson T."/>
            <person name="Nisbett J."/>
            <person name="Nordsiek G."/>
            <person name="Pearce A.V."/>
            <person name="Peck A.I."/>
            <person name="Porter K.M."/>
            <person name="Pandian R."/>
            <person name="Pelan S."/>
            <person name="Phillimore B."/>
            <person name="Povey S."/>
            <person name="Ramsey Y."/>
            <person name="Rand V."/>
            <person name="Scharfe M."/>
            <person name="Sehra H.K."/>
            <person name="Shownkeen R."/>
            <person name="Sims S.K."/>
            <person name="Skuce C.D."/>
            <person name="Smith M."/>
            <person name="Steward C.A."/>
            <person name="Swarbreck D."/>
            <person name="Sycamore N."/>
            <person name="Tester J."/>
            <person name="Thorpe A."/>
            <person name="Tracey A."/>
            <person name="Tromans A."/>
            <person name="Thomas D.W."/>
            <person name="Wall M."/>
            <person name="Wallis J.M."/>
            <person name="West A.P."/>
            <person name="Whitehead S.L."/>
            <person name="Willey D.L."/>
            <person name="Williams S.A."/>
            <person name="Wilming L."/>
            <person name="Wray P.W."/>
            <person name="Young L."/>
            <person name="Ashurst J.L."/>
            <person name="Coulson A."/>
            <person name="Blocker H."/>
            <person name="Durbin R.M."/>
            <person name="Sulston J.E."/>
            <person name="Hubbard T."/>
            <person name="Jackson M.J."/>
            <person name="Bentley D.R."/>
            <person name="Beck S."/>
            <person name="Rogers J."/>
            <person name="Dunham I."/>
        </authorList>
    </citation>
    <scope>NUCLEOTIDE SEQUENCE [LARGE SCALE GENOMIC DNA]</scope>
</reference>
<reference key="2">
    <citation type="journal article" date="2004" name="Genome Res.">
        <title>The status, quality, and expansion of the NIH full-length cDNA project: the Mammalian Gene Collection (MGC).</title>
        <authorList>
            <consortium name="The MGC Project Team"/>
        </authorList>
    </citation>
    <scope>NUCLEOTIDE SEQUENCE [LARGE SCALE MRNA] (ISOFORMS 1 AND 2)</scope>
    <source>
        <tissue>Testis</tissue>
    </source>
</reference>